<feature type="chain" id="PRO_1000164583" description="Orotidine 5'-phosphate decarboxylase">
    <location>
        <begin position="1"/>
        <end position="233"/>
    </location>
</feature>
<feature type="active site" description="Proton donor" evidence="1">
    <location>
        <position position="63"/>
    </location>
</feature>
<feature type="binding site" evidence="1">
    <location>
        <position position="11"/>
    </location>
    <ligand>
        <name>substrate</name>
    </ligand>
</feature>
<feature type="binding site" evidence="1">
    <location>
        <position position="34"/>
    </location>
    <ligand>
        <name>substrate</name>
    </ligand>
</feature>
<feature type="binding site" evidence="1">
    <location>
        <begin position="61"/>
        <end position="70"/>
    </location>
    <ligand>
        <name>substrate</name>
    </ligand>
</feature>
<feature type="binding site" evidence="1">
    <location>
        <position position="117"/>
    </location>
    <ligand>
        <name>substrate</name>
    </ligand>
</feature>
<feature type="binding site" evidence="1">
    <location>
        <position position="179"/>
    </location>
    <ligand>
        <name>substrate</name>
    </ligand>
</feature>
<feature type="binding site" evidence="1">
    <location>
        <position position="188"/>
    </location>
    <ligand>
        <name>substrate</name>
    </ligand>
</feature>
<feature type="binding site" evidence="1">
    <location>
        <position position="208"/>
    </location>
    <ligand>
        <name>substrate</name>
    </ligand>
</feature>
<feature type="binding site" evidence="1">
    <location>
        <position position="209"/>
    </location>
    <ligand>
        <name>substrate</name>
    </ligand>
</feature>
<name>PYRF_STRZJ</name>
<gene>
    <name evidence="1" type="primary">pyrF</name>
    <name type="ordered locus">SPJ_0641</name>
</gene>
<sequence>MREHRPVIALDFPSFEAVKEFLALFPAEESLYLKVGMELYYAAGPEIVSYLKGLGHSVFLDLKLHDIPNTVKSAMKVLSQLGVDMTNVHAAGGVEMMKAAREGLGSQAKLIAVTQLTSTSEAQMQEFQNIQTSLQESVIHYAKKTAEAGLDGVVCSAQEVQVIKQATNPDFICLTPGIRPAGAAVGDQKRVMTPADAYQIGSDYIVVGRPITQAEDPVAAYHTIKDEWTQDWN</sequence>
<reference key="1">
    <citation type="journal article" date="2010" name="Genome Biol.">
        <title>Structure and dynamics of the pan-genome of Streptococcus pneumoniae and closely related species.</title>
        <authorList>
            <person name="Donati C."/>
            <person name="Hiller N.L."/>
            <person name="Tettelin H."/>
            <person name="Muzzi A."/>
            <person name="Croucher N.J."/>
            <person name="Angiuoli S.V."/>
            <person name="Oggioni M."/>
            <person name="Dunning Hotopp J.C."/>
            <person name="Hu F.Z."/>
            <person name="Riley D.R."/>
            <person name="Covacci A."/>
            <person name="Mitchell T.J."/>
            <person name="Bentley S.D."/>
            <person name="Kilian M."/>
            <person name="Ehrlich G.D."/>
            <person name="Rappuoli R."/>
            <person name="Moxon E.R."/>
            <person name="Masignani V."/>
        </authorList>
    </citation>
    <scope>NUCLEOTIDE SEQUENCE [LARGE SCALE GENOMIC DNA]</scope>
    <source>
        <strain>JJA</strain>
    </source>
</reference>
<comment type="function">
    <text evidence="1">Catalyzes the decarboxylation of orotidine 5'-monophosphate (OMP) to uridine 5'-monophosphate (UMP).</text>
</comment>
<comment type="catalytic activity">
    <reaction evidence="1">
        <text>orotidine 5'-phosphate + H(+) = UMP + CO2</text>
        <dbReference type="Rhea" id="RHEA:11596"/>
        <dbReference type="ChEBI" id="CHEBI:15378"/>
        <dbReference type="ChEBI" id="CHEBI:16526"/>
        <dbReference type="ChEBI" id="CHEBI:57538"/>
        <dbReference type="ChEBI" id="CHEBI:57865"/>
        <dbReference type="EC" id="4.1.1.23"/>
    </reaction>
</comment>
<comment type="pathway">
    <text evidence="1">Pyrimidine metabolism; UMP biosynthesis via de novo pathway; UMP from orotate: step 2/2.</text>
</comment>
<comment type="subunit">
    <text evidence="1">Homodimer.</text>
</comment>
<comment type="similarity">
    <text evidence="1">Belongs to the OMP decarboxylase family. Type 1 subfamily.</text>
</comment>
<keyword id="KW-0210">Decarboxylase</keyword>
<keyword id="KW-0456">Lyase</keyword>
<keyword id="KW-0665">Pyrimidine biosynthesis</keyword>
<proteinExistence type="inferred from homology"/>
<dbReference type="EC" id="4.1.1.23" evidence="1"/>
<dbReference type="EMBL" id="CP000919">
    <property type="protein sequence ID" value="ACO18373.1"/>
    <property type="molecule type" value="Genomic_DNA"/>
</dbReference>
<dbReference type="RefSeq" id="WP_001206731.1">
    <property type="nucleotide sequence ID" value="NC_012466.1"/>
</dbReference>
<dbReference type="SMR" id="C1CD54"/>
<dbReference type="KEGG" id="sjj:SPJ_0641"/>
<dbReference type="HOGENOM" id="CLU_067069_1_1_9"/>
<dbReference type="UniPathway" id="UPA00070">
    <property type="reaction ID" value="UER00120"/>
</dbReference>
<dbReference type="Proteomes" id="UP000002206">
    <property type="component" value="Chromosome"/>
</dbReference>
<dbReference type="GO" id="GO:0005829">
    <property type="term" value="C:cytosol"/>
    <property type="evidence" value="ECO:0007669"/>
    <property type="project" value="TreeGrafter"/>
</dbReference>
<dbReference type="GO" id="GO:0004590">
    <property type="term" value="F:orotidine-5'-phosphate decarboxylase activity"/>
    <property type="evidence" value="ECO:0007669"/>
    <property type="project" value="UniProtKB-UniRule"/>
</dbReference>
<dbReference type="GO" id="GO:0006207">
    <property type="term" value="P:'de novo' pyrimidine nucleobase biosynthetic process"/>
    <property type="evidence" value="ECO:0007669"/>
    <property type="project" value="InterPro"/>
</dbReference>
<dbReference type="GO" id="GO:0044205">
    <property type="term" value="P:'de novo' UMP biosynthetic process"/>
    <property type="evidence" value="ECO:0007669"/>
    <property type="project" value="UniProtKB-UniRule"/>
</dbReference>
<dbReference type="CDD" id="cd04725">
    <property type="entry name" value="OMP_decarboxylase_like"/>
    <property type="match status" value="1"/>
</dbReference>
<dbReference type="FunFam" id="3.20.20.70:FF:000015">
    <property type="entry name" value="Orotidine 5'-phosphate decarboxylase"/>
    <property type="match status" value="1"/>
</dbReference>
<dbReference type="Gene3D" id="3.20.20.70">
    <property type="entry name" value="Aldolase class I"/>
    <property type="match status" value="1"/>
</dbReference>
<dbReference type="HAMAP" id="MF_01200_B">
    <property type="entry name" value="OMPdecase_type1_B"/>
    <property type="match status" value="1"/>
</dbReference>
<dbReference type="InterPro" id="IPR013785">
    <property type="entry name" value="Aldolase_TIM"/>
</dbReference>
<dbReference type="InterPro" id="IPR014732">
    <property type="entry name" value="OMPdecase"/>
</dbReference>
<dbReference type="InterPro" id="IPR018089">
    <property type="entry name" value="OMPdecase_AS"/>
</dbReference>
<dbReference type="InterPro" id="IPR047596">
    <property type="entry name" value="OMPdecase_bac"/>
</dbReference>
<dbReference type="InterPro" id="IPR001754">
    <property type="entry name" value="OMPdeCOase_dom"/>
</dbReference>
<dbReference type="InterPro" id="IPR011060">
    <property type="entry name" value="RibuloseP-bd_barrel"/>
</dbReference>
<dbReference type="NCBIfam" id="NF001273">
    <property type="entry name" value="PRK00230.1"/>
    <property type="match status" value="1"/>
</dbReference>
<dbReference type="NCBIfam" id="TIGR01740">
    <property type="entry name" value="pyrF"/>
    <property type="match status" value="1"/>
</dbReference>
<dbReference type="PANTHER" id="PTHR32119">
    <property type="entry name" value="OROTIDINE 5'-PHOSPHATE DECARBOXYLASE"/>
    <property type="match status" value="1"/>
</dbReference>
<dbReference type="PANTHER" id="PTHR32119:SF2">
    <property type="entry name" value="OROTIDINE 5'-PHOSPHATE DECARBOXYLASE"/>
    <property type="match status" value="1"/>
</dbReference>
<dbReference type="Pfam" id="PF00215">
    <property type="entry name" value="OMPdecase"/>
    <property type="match status" value="1"/>
</dbReference>
<dbReference type="SMART" id="SM00934">
    <property type="entry name" value="OMPdecase"/>
    <property type="match status" value="1"/>
</dbReference>
<dbReference type="SUPFAM" id="SSF51366">
    <property type="entry name" value="Ribulose-phoshate binding barrel"/>
    <property type="match status" value="1"/>
</dbReference>
<dbReference type="PROSITE" id="PS00156">
    <property type="entry name" value="OMPDECASE"/>
    <property type="match status" value="1"/>
</dbReference>
<organism>
    <name type="scientific">Streptococcus pneumoniae (strain JJA)</name>
    <dbReference type="NCBI Taxonomy" id="488222"/>
    <lineage>
        <taxon>Bacteria</taxon>
        <taxon>Bacillati</taxon>
        <taxon>Bacillota</taxon>
        <taxon>Bacilli</taxon>
        <taxon>Lactobacillales</taxon>
        <taxon>Streptococcaceae</taxon>
        <taxon>Streptococcus</taxon>
    </lineage>
</organism>
<accession>C1CD54</accession>
<evidence type="ECO:0000255" key="1">
    <source>
        <dbReference type="HAMAP-Rule" id="MF_01200"/>
    </source>
</evidence>
<protein>
    <recommendedName>
        <fullName evidence="1">Orotidine 5'-phosphate decarboxylase</fullName>
        <ecNumber evidence="1">4.1.1.23</ecNumber>
    </recommendedName>
    <alternativeName>
        <fullName evidence="1">OMP decarboxylase</fullName>
        <shortName evidence="1">OMPDCase</shortName>
        <shortName evidence="1">OMPdecase</shortName>
    </alternativeName>
</protein>